<feature type="chain" id="PRO_0000196305" description="Small, acid-soluble spore protein 1">
    <location>
        <begin position="1"/>
        <end position="70"/>
    </location>
</feature>
<feature type="site" description="Cleavage; by spore protease">
    <location>
        <begin position="28"/>
        <end position="29"/>
    </location>
</feature>
<proteinExistence type="inferred from homology"/>
<accession>P06552</accession>
<protein>
    <recommendedName>
        <fullName>Small, acid-soluble spore protein 1</fullName>
        <shortName>SASP</shortName>
    </recommendedName>
</protein>
<evidence type="ECO:0000305" key="1"/>
<sequence length="70" mass="7227">MPNQSGSNSSNQLLVPGAAQVIDQMKFEIASEFGVNLGAETTSRANGSVGGEITKRLVSFAQQQMGGGVQ</sequence>
<dbReference type="EMBL" id="M13061">
    <property type="protein sequence ID" value="AAA22740.1"/>
    <property type="molecule type" value="Genomic_DNA"/>
</dbReference>
<dbReference type="PIR" id="C25234">
    <property type="entry name" value="C25234"/>
</dbReference>
<dbReference type="SMR" id="P06552"/>
<dbReference type="GO" id="GO:0003690">
    <property type="term" value="F:double-stranded DNA binding"/>
    <property type="evidence" value="ECO:0007669"/>
    <property type="project" value="InterPro"/>
</dbReference>
<dbReference type="GO" id="GO:0006265">
    <property type="term" value="P:DNA topological change"/>
    <property type="evidence" value="ECO:0007669"/>
    <property type="project" value="InterPro"/>
</dbReference>
<dbReference type="GO" id="GO:0030435">
    <property type="term" value="P:sporulation resulting in formation of a cellular spore"/>
    <property type="evidence" value="ECO:0007669"/>
    <property type="project" value="UniProtKB-KW"/>
</dbReference>
<dbReference type="Gene3D" id="6.10.10.80">
    <property type="entry name" value="Small, acid-soluble spore protein, alpha/beta type-like"/>
    <property type="match status" value="1"/>
</dbReference>
<dbReference type="InterPro" id="IPR001448">
    <property type="entry name" value="SASP_alpha/beta-type"/>
</dbReference>
<dbReference type="InterPro" id="IPR018126">
    <property type="entry name" value="SASP_alpha/beta-type_CS"/>
</dbReference>
<dbReference type="InterPro" id="IPR050847">
    <property type="entry name" value="SASP_DNA-binding"/>
</dbReference>
<dbReference type="InterPro" id="IPR038300">
    <property type="entry name" value="SASP_sf_alpha/beta"/>
</dbReference>
<dbReference type="PANTHER" id="PTHR36107">
    <property type="entry name" value="SMALL, ACID-SOLUBLE SPORE PROTEIN A"/>
    <property type="match status" value="1"/>
</dbReference>
<dbReference type="PANTHER" id="PTHR36107:SF1">
    <property type="entry name" value="SMALL, ACID-SOLUBLE SPORE PROTEIN A"/>
    <property type="match status" value="1"/>
</dbReference>
<dbReference type="Pfam" id="PF00269">
    <property type="entry name" value="SASP"/>
    <property type="match status" value="1"/>
</dbReference>
<dbReference type="PROSITE" id="PS00304">
    <property type="entry name" value="SASP_1"/>
    <property type="match status" value="1"/>
</dbReference>
<dbReference type="PROSITE" id="PS00684">
    <property type="entry name" value="SASP_2"/>
    <property type="match status" value="1"/>
</dbReference>
<comment type="function">
    <text>SASP are bound to spore DNA. They are double-stranded DNA-binding proteins that cause DNA to change to an a-like conformation. They protect the DNA backbone from chemical and enzymatic cleavage and are thus involved in dormant spore's high resistance to UV light.</text>
</comment>
<comment type="miscellaneous">
    <text>SASP are degraded in the first minutes of spore germination and provide amino acids for both new protein synthesis and metabolism.</text>
</comment>
<comment type="similarity">
    <text evidence="1">Belongs to the alpha/beta-type SASP family.</text>
</comment>
<gene>
    <name type="primary">sasP-1</name>
</gene>
<name>SAS1_GEOSE</name>
<reference key="1">
    <citation type="journal article" date="1986" name="J. Bacteriol.">
        <title>Cloning and nucleotide sequencing of genes for small, acid-soluble spore proteins of Bacillus cereus, Bacillus stearothermophilus, and 'Thermoactinomyces thalpophilus'.</title>
        <authorList>
            <person name="Loshon C.A."/>
            <person name="Fliss E.R."/>
            <person name="Setlow B."/>
            <person name="Foerster H.F."/>
            <person name="Setlow P."/>
        </authorList>
    </citation>
    <scope>NUCLEOTIDE SEQUENCE [GENOMIC DNA]</scope>
</reference>
<keyword id="KW-0238">DNA-binding</keyword>
<keyword id="KW-0749">Sporulation</keyword>
<organism>
    <name type="scientific">Geobacillus stearothermophilus</name>
    <name type="common">Bacillus stearothermophilus</name>
    <dbReference type="NCBI Taxonomy" id="1422"/>
    <lineage>
        <taxon>Bacteria</taxon>
        <taxon>Bacillati</taxon>
        <taxon>Bacillota</taxon>
        <taxon>Bacilli</taxon>
        <taxon>Bacillales</taxon>
        <taxon>Anoxybacillaceae</taxon>
        <taxon>Geobacillus</taxon>
    </lineage>
</organism>